<gene>
    <name evidence="1" type="primary">rsxA</name>
    <name type="ordered locus">E2348C_1714</name>
</gene>
<dbReference type="EC" id="7.-.-.-" evidence="1"/>
<dbReference type="EMBL" id="FM180568">
    <property type="protein sequence ID" value="CAS09262.1"/>
    <property type="molecule type" value="Genomic_DNA"/>
</dbReference>
<dbReference type="RefSeq" id="WP_000133193.1">
    <property type="nucleotide sequence ID" value="NC_011601.1"/>
</dbReference>
<dbReference type="SMR" id="B7URW8"/>
<dbReference type="GeneID" id="89516393"/>
<dbReference type="KEGG" id="ecg:E2348C_1714"/>
<dbReference type="HOGENOM" id="CLU_095255_1_0_6"/>
<dbReference type="Proteomes" id="UP000008205">
    <property type="component" value="Chromosome"/>
</dbReference>
<dbReference type="GO" id="GO:0005886">
    <property type="term" value="C:plasma membrane"/>
    <property type="evidence" value="ECO:0007669"/>
    <property type="project" value="UniProtKB-SubCell"/>
</dbReference>
<dbReference type="GO" id="GO:0022900">
    <property type="term" value="P:electron transport chain"/>
    <property type="evidence" value="ECO:0007669"/>
    <property type="project" value="UniProtKB-UniRule"/>
</dbReference>
<dbReference type="HAMAP" id="MF_00459">
    <property type="entry name" value="RsxA_RnfA"/>
    <property type="match status" value="1"/>
</dbReference>
<dbReference type="InterPro" id="IPR011293">
    <property type="entry name" value="Ion_transpt_RnfA/RsxA"/>
</dbReference>
<dbReference type="InterPro" id="IPR003667">
    <property type="entry name" value="NqrDE/RnfAE"/>
</dbReference>
<dbReference type="InterPro" id="IPR050133">
    <property type="entry name" value="NqrDE/RnfAE_oxidrdctase"/>
</dbReference>
<dbReference type="NCBIfam" id="NF003481">
    <property type="entry name" value="PRK05151.1"/>
    <property type="match status" value="1"/>
</dbReference>
<dbReference type="NCBIfam" id="TIGR01943">
    <property type="entry name" value="rnfA"/>
    <property type="match status" value="1"/>
</dbReference>
<dbReference type="PANTHER" id="PTHR30335">
    <property type="entry name" value="INTEGRAL MEMBRANE PROTEIN OF SOXR-REDUCING COMPLEX"/>
    <property type="match status" value="1"/>
</dbReference>
<dbReference type="PANTHER" id="PTHR30335:SF0">
    <property type="entry name" value="ION-TRANSLOCATING OXIDOREDUCTASE COMPLEX SUBUNIT A"/>
    <property type="match status" value="1"/>
</dbReference>
<dbReference type="Pfam" id="PF02508">
    <property type="entry name" value="Rnf-Nqr"/>
    <property type="match status" value="1"/>
</dbReference>
<dbReference type="PIRSF" id="PIRSF006102">
    <property type="entry name" value="NQR_DE"/>
    <property type="match status" value="1"/>
</dbReference>
<accession>B7URW8</accession>
<protein>
    <recommendedName>
        <fullName evidence="1">Ion-translocating oxidoreductase complex subunit A</fullName>
        <ecNumber evidence="1">7.-.-.-</ecNumber>
    </recommendedName>
    <alternativeName>
        <fullName evidence="1">Rsx electron transport complex subunit A</fullName>
    </alternativeName>
</protein>
<name>RSXA_ECO27</name>
<comment type="function">
    <text evidence="1">Part of a membrane-bound complex that couples electron transfer with translocation of ions across the membrane. Required to maintain the reduced state of SoxR.</text>
</comment>
<comment type="subunit">
    <text evidence="1">The complex is composed of six subunits: RsxA, RsxB, RsxC, RsxD, RsxE and RsxG.</text>
</comment>
<comment type="subcellular location">
    <subcellularLocation>
        <location evidence="1">Cell inner membrane</location>
        <topology evidence="1">Multi-pass membrane protein</topology>
    </subcellularLocation>
</comment>
<comment type="similarity">
    <text evidence="1">Belongs to the NqrDE/RnfAE family.</text>
</comment>
<organism>
    <name type="scientific">Escherichia coli O127:H6 (strain E2348/69 / EPEC)</name>
    <dbReference type="NCBI Taxonomy" id="574521"/>
    <lineage>
        <taxon>Bacteria</taxon>
        <taxon>Pseudomonadati</taxon>
        <taxon>Pseudomonadota</taxon>
        <taxon>Gammaproteobacteria</taxon>
        <taxon>Enterobacterales</taxon>
        <taxon>Enterobacteriaceae</taxon>
        <taxon>Escherichia</taxon>
    </lineage>
</organism>
<reference key="1">
    <citation type="journal article" date="2009" name="J. Bacteriol.">
        <title>Complete genome sequence and comparative genome analysis of enteropathogenic Escherichia coli O127:H6 strain E2348/69.</title>
        <authorList>
            <person name="Iguchi A."/>
            <person name="Thomson N.R."/>
            <person name="Ogura Y."/>
            <person name="Saunders D."/>
            <person name="Ooka T."/>
            <person name="Henderson I.R."/>
            <person name="Harris D."/>
            <person name="Asadulghani M."/>
            <person name="Kurokawa K."/>
            <person name="Dean P."/>
            <person name="Kenny B."/>
            <person name="Quail M.A."/>
            <person name="Thurston S."/>
            <person name="Dougan G."/>
            <person name="Hayashi T."/>
            <person name="Parkhill J."/>
            <person name="Frankel G."/>
        </authorList>
    </citation>
    <scope>NUCLEOTIDE SEQUENCE [LARGE SCALE GENOMIC DNA]</scope>
    <source>
        <strain>E2348/69 / EPEC</strain>
    </source>
</reference>
<keyword id="KW-0997">Cell inner membrane</keyword>
<keyword id="KW-1003">Cell membrane</keyword>
<keyword id="KW-0249">Electron transport</keyword>
<keyword id="KW-0472">Membrane</keyword>
<keyword id="KW-1185">Reference proteome</keyword>
<keyword id="KW-1278">Translocase</keyword>
<keyword id="KW-0812">Transmembrane</keyword>
<keyword id="KW-1133">Transmembrane helix</keyword>
<keyword id="KW-0813">Transport</keyword>
<feature type="chain" id="PRO_1000191718" description="Ion-translocating oxidoreductase complex subunit A">
    <location>
        <begin position="1"/>
        <end position="193"/>
    </location>
</feature>
<feature type="transmembrane region" description="Helical" evidence="1">
    <location>
        <begin position="5"/>
        <end position="25"/>
    </location>
</feature>
<feature type="transmembrane region" description="Helical" evidence="1">
    <location>
        <begin position="39"/>
        <end position="59"/>
    </location>
</feature>
<feature type="transmembrane region" description="Helical" evidence="1">
    <location>
        <begin position="63"/>
        <end position="83"/>
    </location>
</feature>
<feature type="transmembrane region" description="Helical" evidence="1">
    <location>
        <begin position="102"/>
        <end position="122"/>
    </location>
</feature>
<feature type="transmembrane region" description="Helical" evidence="1">
    <location>
        <begin position="134"/>
        <end position="154"/>
    </location>
</feature>
<feature type="transmembrane region" description="Helical" evidence="1">
    <location>
        <begin position="171"/>
        <end position="191"/>
    </location>
</feature>
<sequence length="193" mass="20898">MTDYLLLFVGTVLVNNFVLVKFLGLCPFMGVSKKLETAMGMGLATTFVMTLASICAWLIDTWILIPLNLIYLRTLAFILVIAVVVQFTEMVVRKTSPVLYRLLGIFLPLITTNCAVLGVALLNINLGHNFLQSALYGFSAAVGFSLVMVLFAAIRERLAVADVPAPFRGNAIALITAGLMSLAFMGFSGLVKL</sequence>
<evidence type="ECO:0000255" key="1">
    <source>
        <dbReference type="HAMAP-Rule" id="MF_00459"/>
    </source>
</evidence>
<proteinExistence type="inferred from homology"/>